<keyword id="KW-0963">Cytoplasm</keyword>
<keyword id="KW-0539">Nucleus</keyword>
<keyword id="KW-0597">Phosphoprotein</keyword>
<keyword id="KW-1185">Reference proteome</keyword>
<keyword id="KW-0832">Ubl conjugation</keyword>
<comment type="function">
    <text evidence="1 2">In unstressed cells, promotes SIAH1-mediated polyubiquitination and degradation of the serine/threonine-protein kinase HIPK2, probably by acting as a loading factor that potentiates complex formation between HIPK2 and ubiquitin ligase SIAH1 (By similarity). In response to DNA damage, localizes to the nucleus following phosphorylation by HIPK2 and modulates the expression of a subset of TP53/p53 target genes by binding to TP53 at target gene promoters (By similarity). This limits the expression of a number of cell death-mediating TP53 target genes, reducing DNA damage-induced cell death (By similarity). Enhances the binding of transcription factor TCF7L2/TCF4, a Wnt signaling pathway effector, to the promoters of target genes (By similarity). Plays a role in stress granule formation (By similarity).</text>
</comment>
<comment type="subunit">
    <text evidence="1 2">Interacts with SOX6. Interacts with DAZ1 and DAZL. Interacts with IL17RB. May interact with FAM168B. Interacts with INCA1. Interacts with EIF4G1 and EIF4G2 (By similarity). Interacts (via PPAY motif) with NEDD4 (via WW domains) (By similarity). Interacts with transcription factor TCF4; the interaction results in localization of DAZAP2 to the nucleus (By similarity). Interacts with transcription factors TCF7 and TCF7L1 (By similarity). Interacts with transcription factor LEF1 (By similarity). Interacts with serine/threonine-protein kinase HIPK2; the interaction results in phosphorylation of DAZAP2 which causes localization of DAZAP2 to the nucleus, reduces interaction of DAZAP2 with HIPK2 and prevents DAZAP2-dependent degradation of HIPK2 (By similarity). Interacts with ubiquitin ligase SIAH1; the interaction is decreased following phosphorylation of DAZAP2 by HIPK2 (By similarity). Interacts with TP53; the interaction is triggered by DNA damage (By similarity).</text>
</comment>
<comment type="subcellular location">
    <subcellularLocation>
        <location evidence="1">Cytoplasm</location>
    </subcellularLocation>
    <subcellularLocation>
        <location evidence="1">Nucleus</location>
    </subcellularLocation>
    <subcellularLocation>
        <location evidence="1">Nucleus speckle</location>
    </subcellularLocation>
    <subcellularLocation>
        <location evidence="1">Nucleus</location>
        <location evidence="1">Nuclear body</location>
    </subcellularLocation>
    <subcellularLocation>
        <location evidence="1">Cytoplasm</location>
        <location evidence="1">Stress granule</location>
    </subcellularLocation>
    <text evidence="1">Predominantly nuclear in macrophages, stimulation of IL17RB with its ligand IL17E induces accumulation in the cytoplasm (By similarity). Predominantly cytoplasmic when unphosphorylated and localizes to the nucleus following phosphorylation by HIPK2 (By similarity). Localizes to stress granules under cellular stress conditions (By similarity).</text>
</comment>
<comment type="PTM">
    <text evidence="1">Ubiquitinated by SMURF2, leading to proteasomal degradation. Ubiquitinated by NEDD4, leading to proteasomal degradation.</text>
</comment>
<comment type="PTM">
    <text evidence="1">Following DNA damage, phosphorylated by HIPK2 which promotes DAZAP2 localization to the nucleus, reduces interaction of DAZAP2 with HIPK2 and SIAH1, and prevents DAZAP2-dependent ubiquitination of HIPK2 by E3 ubiquitin-protein ligase SIAH1 and subsequent HIPK2 proteasomal degradation.</text>
</comment>
<dbReference type="EMBL" id="CR861053">
    <property type="protein sequence ID" value="CAH93140.1"/>
    <property type="molecule type" value="mRNA"/>
</dbReference>
<dbReference type="EMBL" id="CR926118">
    <property type="protein sequence ID" value="CAI29743.1"/>
    <property type="molecule type" value="mRNA"/>
</dbReference>
<dbReference type="RefSeq" id="NP_001127124.1">
    <property type="nucleotide sequence ID" value="NM_001133652.1"/>
</dbReference>
<dbReference type="FunCoup" id="Q5R526">
    <property type="interactions" value="1926"/>
</dbReference>
<dbReference type="STRING" id="9601.ENSPPYP00000005163"/>
<dbReference type="Ensembl" id="ENSPPYT00000005364.2">
    <property type="protein sequence ID" value="ENSPPYP00000005163.1"/>
    <property type="gene ID" value="ENSPPYG00000004524.2"/>
</dbReference>
<dbReference type="GeneID" id="100174170"/>
<dbReference type="KEGG" id="pon:100174170"/>
<dbReference type="CTD" id="9802"/>
<dbReference type="eggNOG" id="ENOG502QTNQ">
    <property type="taxonomic scope" value="Eukaryota"/>
</dbReference>
<dbReference type="GeneTree" id="ENSGT00390000000685"/>
<dbReference type="HOGENOM" id="CLU_135110_0_0_1"/>
<dbReference type="InParanoid" id="Q5R526"/>
<dbReference type="OMA" id="IYQPRYM"/>
<dbReference type="OrthoDB" id="6514304at2759"/>
<dbReference type="TreeFam" id="TF329672"/>
<dbReference type="Proteomes" id="UP000001595">
    <property type="component" value="Chromosome 12"/>
</dbReference>
<dbReference type="GO" id="GO:0005737">
    <property type="term" value="C:cytoplasm"/>
    <property type="evidence" value="ECO:0000250"/>
    <property type="project" value="UniProtKB"/>
</dbReference>
<dbReference type="GO" id="GO:0010494">
    <property type="term" value="C:cytoplasmic stress granule"/>
    <property type="evidence" value="ECO:0000250"/>
    <property type="project" value="UniProtKB"/>
</dbReference>
<dbReference type="GO" id="GO:0016604">
    <property type="term" value="C:nuclear body"/>
    <property type="evidence" value="ECO:0000250"/>
    <property type="project" value="UniProtKB"/>
</dbReference>
<dbReference type="GO" id="GO:0016607">
    <property type="term" value="C:nuclear speck"/>
    <property type="evidence" value="ECO:0000250"/>
    <property type="project" value="UniProtKB"/>
</dbReference>
<dbReference type="GO" id="GO:0005634">
    <property type="term" value="C:nucleus"/>
    <property type="evidence" value="ECO:0000250"/>
    <property type="project" value="UniProtKB"/>
</dbReference>
<dbReference type="GO" id="GO:0032991">
    <property type="term" value="C:protein-containing complex"/>
    <property type="evidence" value="ECO:0007669"/>
    <property type="project" value="Ensembl"/>
</dbReference>
<dbReference type="GO" id="GO:0140297">
    <property type="term" value="F:DNA-binding transcription factor binding"/>
    <property type="evidence" value="ECO:0007669"/>
    <property type="project" value="Ensembl"/>
</dbReference>
<dbReference type="GO" id="GO:0042802">
    <property type="term" value="F:identical protein binding"/>
    <property type="evidence" value="ECO:0007669"/>
    <property type="project" value="Ensembl"/>
</dbReference>
<dbReference type="GO" id="GO:0031435">
    <property type="term" value="F:mitogen-activated protein kinase kinase kinase binding"/>
    <property type="evidence" value="ECO:0007669"/>
    <property type="project" value="Ensembl"/>
</dbReference>
<dbReference type="GO" id="GO:0002039">
    <property type="term" value="F:p53 binding"/>
    <property type="evidence" value="ECO:0000250"/>
    <property type="project" value="UniProtKB"/>
</dbReference>
<dbReference type="GO" id="GO:0043539">
    <property type="term" value="F:protein serine/threonine kinase activator activity"/>
    <property type="evidence" value="ECO:0007669"/>
    <property type="project" value="Ensembl"/>
</dbReference>
<dbReference type="GO" id="GO:0120283">
    <property type="term" value="F:protein serine/threonine kinase binding"/>
    <property type="evidence" value="ECO:0000250"/>
    <property type="project" value="UniProtKB"/>
</dbReference>
<dbReference type="GO" id="GO:0030971">
    <property type="term" value="F:receptor tyrosine kinase binding"/>
    <property type="evidence" value="ECO:0007669"/>
    <property type="project" value="Ensembl"/>
</dbReference>
<dbReference type="GO" id="GO:0031625">
    <property type="term" value="F:ubiquitin protein ligase binding"/>
    <property type="evidence" value="ECO:0000250"/>
    <property type="project" value="UniProtKB"/>
</dbReference>
<dbReference type="GO" id="GO:0050699">
    <property type="term" value="F:WW domain binding"/>
    <property type="evidence" value="ECO:0007669"/>
    <property type="project" value="Ensembl"/>
</dbReference>
<dbReference type="GO" id="GO:1905636">
    <property type="term" value="P:positive regulation of RNA polymerase II regulatory region sequence-specific DNA binding"/>
    <property type="evidence" value="ECO:0000250"/>
    <property type="project" value="UniProtKB"/>
</dbReference>
<dbReference type="GO" id="GO:0031648">
    <property type="term" value="P:protein destabilization"/>
    <property type="evidence" value="ECO:0000250"/>
    <property type="project" value="UniProtKB"/>
</dbReference>
<dbReference type="GO" id="GO:0034063">
    <property type="term" value="P:stress granule assembly"/>
    <property type="evidence" value="ECO:0000250"/>
    <property type="project" value="UniProtKB"/>
</dbReference>
<dbReference type="InterPro" id="IPR022730">
    <property type="entry name" value="DAZ_assoc-2"/>
</dbReference>
<dbReference type="PANTHER" id="PTHR31638">
    <property type="entry name" value="DAZ-ASSOCIATED PROTEIN 2"/>
    <property type="match status" value="1"/>
</dbReference>
<dbReference type="PANTHER" id="PTHR31638:SF4">
    <property type="entry name" value="DAZ-ASSOCIATED PROTEIN 2"/>
    <property type="match status" value="1"/>
</dbReference>
<dbReference type="Pfam" id="PF11029">
    <property type="entry name" value="DAZAP2"/>
    <property type="match status" value="1"/>
</dbReference>
<feature type="chain" id="PRO_0000285819" description="DAZ-associated protein 2">
    <location>
        <begin position="1"/>
        <end position="168"/>
    </location>
</feature>
<feature type="region of interest" description="Disordered" evidence="3">
    <location>
        <begin position="1"/>
        <end position="25"/>
    </location>
</feature>
<feature type="short sequence motif" description="PPAY" evidence="1">
    <location>
        <begin position="39"/>
        <end position="42"/>
    </location>
</feature>
<feature type="compositionally biased region" description="Low complexity" evidence="3">
    <location>
        <begin position="1"/>
        <end position="13"/>
    </location>
</feature>
<feature type="modified residue" description="Phosphoserine" evidence="1">
    <location>
        <position position="77"/>
    </location>
</feature>
<feature type="sequence conflict" description="In Ref. 1; CAI29743." evidence="4" ref="1">
    <original>V</original>
    <variation>A</variation>
    <location>
        <position position="51"/>
    </location>
</feature>
<protein>
    <recommendedName>
        <fullName evidence="1">DAZ-associated protein 2</fullName>
    </recommendedName>
    <alternativeName>
        <fullName>Deleted in azoospermia-associated protein 2</fullName>
    </alternativeName>
    <alternativeName>
        <fullName evidence="1">Proline-rich transcript in brain protein</fullName>
    </alternativeName>
</protein>
<name>DAZP2_PONAB</name>
<sequence>MNSKGQYPTQPTYPVQPPGNPVYPQTLHLPQAPPYTDAPPAYSELYRPSFVHPGAATVPTMSAAFPGASLYLPMAQSVAVGPLGSTIPMAYYPVGPIYPPGSTVLVEGGYDAGARFGAGATAGNIPPPPPGCPPNAAQLAVMQGANVLVTQRKGNFFMGGSDGGYTIW</sequence>
<proteinExistence type="evidence at transcript level"/>
<organism>
    <name type="scientific">Pongo abelii</name>
    <name type="common">Sumatran orangutan</name>
    <name type="synonym">Pongo pygmaeus abelii</name>
    <dbReference type="NCBI Taxonomy" id="9601"/>
    <lineage>
        <taxon>Eukaryota</taxon>
        <taxon>Metazoa</taxon>
        <taxon>Chordata</taxon>
        <taxon>Craniata</taxon>
        <taxon>Vertebrata</taxon>
        <taxon>Euteleostomi</taxon>
        <taxon>Mammalia</taxon>
        <taxon>Eutheria</taxon>
        <taxon>Euarchontoglires</taxon>
        <taxon>Primates</taxon>
        <taxon>Haplorrhini</taxon>
        <taxon>Catarrhini</taxon>
        <taxon>Hominidae</taxon>
        <taxon>Pongo</taxon>
    </lineage>
</organism>
<gene>
    <name evidence="1" type="primary">DAZAP2</name>
    <name evidence="1" type="synonym">PRTB</name>
</gene>
<reference key="1">
    <citation type="submission" date="2004-11" db="EMBL/GenBank/DDBJ databases">
        <authorList>
            <consortium name="The German cDNA consortium"/>
        </authorList>
    </citation>
    <scope>NUCLEOTIDE SEQUENCE [LARGE SCALE MRNA]</scope>
    <source>
        <tissue>Brain cortex</tissue>
    </source>
</reference>
<evidence type="ECO:0000250" key="1">
    <source>
        <dbReference type="UniProtKB" id="Q15038"/>
    </source>
</evidence>
<evidence type="ECO:0000250" key="2">
    <source>
        <dbReference type="UniProtKB" id="Q9DCP9"/>
    </source>
</evidence>
<evidence type="ECO:0000256" key="3">
    <source>
        <dbReference type="SAM" id="MobiDB-lite"/>
    </source>
</evidence>
<evidence type="ECO:0000305" key="4"/>
<accession>Q5R526</accession>
<accession>Q5NVC0</accession>